<reference key="1">
    <citation type="journal article" date="2003" name="Proc. Natl. Acad. Sci. U.S.A.">
        <title>The genome sequence of Clostridium tetani, the causative agent of tetanus disease.</title>
        <authorList>
            <person name="Brueggemann H."/>
            <person name="Baeumer S."/>
            <person name="Fricke W.F."/>
            <person name="Wiezer A."/>
            <person name="Liesegang H."/>
            <person name="Decker I."/>
            <person name="Herzberg C."/>
            <person name="Martinez-Arias R."/>
            <person name="Merkl R."/>
            <person name="Henne A."/>
            <person name="Gottschalk G."/>
        </authorList>
    </citation>
    <scope>NUCLEOTIDE SEQUENCE [LARGE SCALE GENOMIC DNA]</scope>
    <source>
        <strain>Massachusetts / E88</strain>
    </source>
</reference>
<sequence>MLMPKRVKHRKVQRGRMKGKATRGNFIAYGDYGIQATECGWITSNQIESARIAINRYIRRGGKLWIKIFPDKPVTQKPAETRMGSGKGTPEYWVAVVKPGRVLFELTGVDEETAREAMRLAAHKLPVKTKFVKKSDFEEVGGEINEG</sequence>
<keyword id="KW-1185">Reference proteome</keyword>
<keyword id="KW-0687">Ribonucleoprotein</keyword>
<keyword id="KW-0689">Ribosomal protein</keyword>
<keyword id="KW-0694">RNA-binding</keyword>
<keyword id="KW-0699">rRNA-binding</keyword>
<keyword id="KW-0820">tRNA-binding</keyword>
<dbReference type="EMBL" id="AE015927">
    <property type="protein sequence ID" value="AAO37050.1"/>
    <property type="molecule type" value="Genomic_DNA"/>
</dbReference>
<dbReference type="RefSeq" id="WP_011100711.1">
    <property type="nucleotide sequence ID" value="NC_004557.1"/>
</dbReference>
<dbReference type="SMR" id="Q890P5"/>
<dbReference type="STRING" id="212717.CTC_02595"/>
<dbReference type="GeneID" id="24253232"/>
<dbReference type="KEGG" id="ctc:CTC_02595"/>
<dbReference type="HOGENOM" id="CLU_078858_2_1_9"/>
<dbReference type="OrthoDB" id="9802589at2"/>
<dbReference type="Proteomes" id="UP000001412">
    <property type="component" value="Chromosome"/>
</dbReference>
<dbReference type="GO" id="GO:0022625">
    <property type="term" value="C:cytosolic large ribosomal subunit"/>
    <property type="evidence" value="ECO:0007669"/>
    <property type="project" value="TreeGrafter"/>
</dbReference>
<dbReference type="GO" id="GO:0019843">
    <property type="term" value="F:rRNA binding"/>
    <property type="evidence" value="ECO:0007669"/>
    <property type="project" value="UniProtKB-UniRule"/>
</dbReference>
<dbReference type="GO" id="GO:0003735">
    <property type="term" value="F:structural constituent of ribosome"/>
    <property type="evidence" value="ECO:0007669"/>
    <property type="project" value="InterPro"/>
</dbReference>
<dbReference type="GO" id="GO:0000049">
    <property type="term" value="F:tRNA binding"/>
    <property type="evidence" value="ECO:0007669"/>
    <property type="project" value="UniProtKB-KW"/>
</dbReference>
<dbReference type="GO" id="GO:0006412">
    <property type="term" value="P:translation"/>
    <property type="evidence" value="ECO:0007669"/>
    <property type="project" value="UniProtKB-UniRule"/>
</dbReference>
<dbReference type="CDD" id="cd01433">
    <property type="entry name" value="Ribosomal_L16_L10e"/>
    <property type="match status" value="1"/>
</dbReference>
<dbReference type="FunFam" id="3.90.1170.10:FF:000001">
    <property type="entry name" value="50S ribosomal protein L16"/>
    <property type="match status" value="1"/>
</dbReference>
<dbReference type="Gene3D" id="3.90.1170.10">
    <property type="entry name" value="Ribosomal protein L10e/L16"/>
    <property type="match status" value="1"/>
</dbReference>
<dbReference type="HAMAP" id="MF_01342">
    <property type="entry name" value="Ribosomal_uL16"/>
    <property type="match status" value="1"/>
</dbReference>
<dbReference type="InterPro" id="IPR047873">
    <property type="entry name" value="Ribosomal_uL16"/>
</dbReference>
<dbReference type="InterPro" id="IPR000114">
    <property type="entry name" value="Ribosomal_uL16_bact-type"/>
</dbReference>
<dbReference type="InterPro" id="IPR020798">
    <property type="entry name" value="Ribosomal_uL16_CS"/>
</dbReference>
<dbReference type="InterPro" id="IPR016180">
    <property type="entry name" value="Ribosomal_uL16_dom"/>
</dbReference>
<dbReference type="InterPro" id="IPR036920">
    <property type="entry name" value="Ribosomal_uL16_sf"/>
</dbReference>
<dbReference type="NCBIfam" id="TIGR01164">
    <property type="entry name" value="rplP_bact"/>
    <property type="match status" value="1"/>
</dbReference>
<dbReference type="PANTHER" id="PTHR12220">
    <property type="entry name" value="50S/60S RIBOSOMAL PROTEIN L16"/>
    <property type="match status" value="1"/>
</dbReference>
<dbReference type="PANTHER" id="PTHR12220:SF13">
    <property type="entry name" value="LARGE RIBOSOMAL SUBUNIT PROTEIN UL16M"/>
    <property type="match status" value="1"/>
</dbReference>
<dbReference type="Pfam" id="PF00252">
    <property type="entry name" value="Ribosomal_L16"/>
    <property type="match status" value="1"/>
</dbReference>
<dbReference type="PRINTS" id="PR00060">
    <property type="entry name" value="RIBOSOMALL16"/>
</dbReference>
<dbReference type="SUPFAM" id="SSF54686">
    <property type="entry name" value="Ribosomal protein L16p/L10e"/>
    <property type="match status" value="1"/>
</dbReference>
<dbReference type="PROSITE" id="PS00586">
    <property type="entry name" value="RIBOSOMAL_L16_1"/>
    <property type="match status" value="1"/>
</dbReference>
<dbReference type="PROSITE" id="PS00701">
    <property type="entry name" value="RIBOSOMAL_L16_2"/>
    <property type="match status" value="1"/>
</dbReference>
<name>RL16_CLOTE</name>
<protein>
    <recommendedName>
        <fullName evidence="1">Large ribosomal subunit protein uL16</fullName>
    </recommendedName>
    <alternativeName>
        <fullName evidence="2">50S ribosomal protein L16</fullName>
    </alternativeName>
</protein>
<feature type="chain" id="PRO_0000062083" description="Large ribosomal subunit protein uL16">
    <location>
        <begin position="1"/>
        <end position="147"/>
    </location>
</feature>
<gene>
    <name evidence="1" type="primary">rplP</name>
    <name type="ordered locus">CTC_02595</name>
</gene>
<accession>Q890P5</accession>
<organism>
    <name type="scientific">Clostridium tetani (strain Massachusetts / E88)</name>
    <dbReference type="NCBI Taxonomy" id="212717"/>
    <lineage>
        <taxon>Bacteria</taxon>
        <taxon>Bacillati</taxon>
        <taxon>Bacillota</taxon>
        <taxon>Clostridia</taxon>
        <taxon>Eubacteriales</taxon>
        <taxon>Clostridiaceae</taxon>
        <taxon>Clostridium</taxon>
    </lineage>
</organism>
<evidence type="ECO:0000255" key="1">
    <source>
        <dbReference type="HAMAP-Rule" id="MF_01342"/>
    </source>
</evidence>
<evidence type="ECO:0000305" key="2"/>
<proteinExistence type="inferred from homology"/>
<comment type="function">
    <text evidence="1">Binds 23S rRNA and is also seen to make contacts with the A and possibly P site tRNAs.</text>
</comment>
<comment type="subunit">
    <text evidence="1">Part of the 50S ribosomal subunit.</text>
</comment>
<comment type="similarity">
    <text evidence="1">Belongs to the universal ribosomal protein uL16 family.</text>
</comment>